<name>MED14_MYCMD</name>
<evidence type="ECO:0000250" key="1"/>
<evidence type="ECO:0000256" key="2">
    <source>
        <dbReference type="SAM" id="MobiDB-lite"/>
    </source>
</evidence>
<evidence type="ECO:0000305" key="3"/>
<feature type="chain" id="PRO_0000304608" description="Mediator of RNA polymerase II transcription subunit 14">
    <location>
        <begin position="1"/>
        <end position="1493"/>
    </location>
</feature>
<feature type="region of interest" description="Disordered" evidence="2">
    <location>
        <begin position="1"/>
        <end position="51"/>
    </location>
</feature>
<feature type="region of interest" description="Disordered" evidence="2">
    <location>
        <begin position="71"/>
        <end position="110"/>
    </location>
</feature>
<feature type="region of interest" description="Disordered" evidence="2">
    <location>
        <begin position="408"/>
        <end position="427"/>
    </location>
</feature>
<feature type="region of interest" description="Disordered" evidence="2">
    <location>
        <begin position="674"/>
        <end position="693"/>
    </location>
</feature>
<feature type="region of interest" description="Disordered" evidence="2">
    <location>
        <begin position="894"/>
        <end position="913"/>
    </location>
</feature>
<feature type="region of interest" description="Disordered" evidence="2">
    <location>
        <begin position="957"/>
        <end position="997"/>
    </location>
</feature>
<feature type="compositionally biased region" description="Basic and acidic residues" evidence="2">
    <location>
        <begin position="90"/>
        <end position="100"/>
    </location>
</feature>
<keyword id="KW-0010">Activator</keyword>
<keyword id="KW-0539">Nucleus</keyword>
<keyword id="KW-1185">Reference proteome</keyword>
<keyword id="KW-0804">Transcription</keyword>
<keyword id="KW-0805">Transcription regulation</keyword>
<comment type="function">
    <text evidence="1">Component of the Mediator complex, a coactivator involved in the regulated transcription of nearly all RNA polymerase II-dependent genes. Mediator functions as a bridge to convey information from gene-specific regulatory proteins to the basal RNA polymerase II transcription machinery. Mediator is recruited to promoters by direct interactions with regulatory proteins and serves as a scaffold for the assembly of a functional preinitiation complex with RNA polymerase II and the general transcription factors (By similarity).</text>
</comment>
<comment type="subunit">
    <text evidence="1">Component of the Mediator complex.</text>
</comment>
<comment type="subcellular location">
    <subcellularLocation>
        <location evidence="3">Nucleus</location>
    </subcellularLocation>
</comment>
<comment type="similarity">
    <text evidence="3">Belongs to the Mediator complex subunit 14 family.</text>
</comment>
<reference key="1">
    <citation type="journal article" date="2006" name="Nature">
        <title>Insights from the genome of the biotrophic fungal plant pathogen Ustilago maydis.</title>
        <authorList>
            <person name="Kaemper J."/>
            <person name="Kahmann R."/>
            <person name="Boelker M."/>
            <person name="Ma L.-J."/>
            <person name="Brefort T."/>
            <person name="Saville B.J."/>
            <person name="Banuett F."/>
            <person name="Kronstad J.W."/>
            <person name="Gold S.E."/>
            <person name="Mueller O."/>
            <person name="Perlin M.H."/>
            <person name="Woesten H.A.B."/>
            <person name="de Vries R."/>
            <person name="Ruiz-Herrera J."/>
            <person name="Reynaga-Pena C.G."/>
            <person name="Snetselaar K."/>
            <person name="McCann M."/>
            <person name="Perez-Martin J."/>
            <person name="Feldbruegge M."/>
            <person name="Basse C.W."/>
            <person name="Steinberg G."/>
            <person name="Ibeas J.I."/>
            <person name="Holloman W."/>
            <person name="Guzman P."/>
            <person name="Farman M.L."/>
            <person name="Stajich J.E."/>
            <person name="Sentandreu R."/>
            <person name="Gonzalez-Prieto J.M."/>
            <person name="Kennell J.C."/>
            <person name="Molina L."/>
            <person name="Schirawski J."/>
            <person name="Mendoza-Mendoza A."/>
            <person name="Greilinger D."/>
            <person name="Muench K."/>
            <person name="Roessel N."/>
            <person name="Scherer M."/>
            <person name="Vranes M."/>
            <person name="Ladendorf O."/>
            <person name="Vincon V."/>
            <person name="Fuchs U."/>
            <person name="Sandrock B."/>
            <person name="Meng S."/>
            <person name="Ho E.C.H."/>
            <person name="Cahill M.J."/>
            <person name="Boyce K.J."/>
            <person name="Klose J."/>
            <person name="Klosterman S.J."/>
            <person name="Deelstra H.J."/>
            <person name="Ortiz-Castellanos L."/>
            <person name="Li W."/>
            <person name="Sanchez-Alonso P."/>
            <person name="Schreier P.H."/>
            <person name="Haeuser-Hahn I."/>
            <person name="Vaupel M."/>
            <person name="Koopmann E."/>
            <person name="Friedrich G."/>
            <person name="Voss H."/>
            <person name="Schlueter T."/>
            <person name="Margolis J."/>
            <person name="Platt D."/>
            <person name="Swimmer C."/>
            <person name="Gnirke A."/>
            <person name="Chen F."/>
            <person name="Vysotskaia V."/>
            <person name="Mannhaupt G."/>
            <person name="Gueldener U."/>
            <person name="Muensterkoetter M."/>
            <person name="Haase D."/>
            <person name="Oesterheld M."/>
            <person name="Mewes H.-W."/>
            <person name="Mauceli E.W."/>
            <person name="DeCaprio D."/>
            <person name="Wade C.M."/>
            <person name="Butler J."/>
            <person name="Young S.K."/>
            <person name="Jaffe D.B."/>
            <person name="Calvo S.E."/>
            <person name="Nusbaum C."/>
            <person name="Galagan J.E."/>
            <person name="Birren B.W."/>
        </authorList>
    </citation>
    <scope>NUCLEOTIDE SEQUENCE [LARGE SCALE GENOMIC DNA]</scope>
    <source>
        <strain>DSM 14603 / FGSC 9021 / UM521</strain>
    </source>
</reference>
<reference key="2">
    <citation type="submission" date="2014-09" db="EMBL/GenBank/DDBJ databases">
        <authorList>
            <person name="Gueldener U."/>
            <person name="Muensterkoetter M."/>
            <person name="Walter M.C."/>
            <person name="Mannhaupt G."/>
            <person name="Kahmann R."/>
        </authorList>
    </citation>
    <scope>GENOME REANNOTATION</scope>
    <source>
        <strain>DSM 14603 / FGSC 9021 / UM521</strain>
    </source>
</reference>
<protein>
    <recommendedName>
        <fullName>Mediator of RNA polymerase II transcription subunit 14</fullName>
    </recommendedName>
    <alternativeName>
        <fullName>Mediator complex subunit 14</fullName>
    </alternativeName>
</protein>
<proteinExistence type="inferred from homology"/>
<sequence length="1493" mass="164482">MPSSPYGANASTSHQHVKQNAHPSAPLSRTSPSLPPKPTVAMNGNGHYHAAPTSVALDKNKQTATSSHNLMIGVPPAATPNLSLAQSRPPDSKQSSDADGHPVFLSSAKGKQKQVDPIHIPLAQLEQELPLEEADLISLAALVERLANFGYEALQNLAETLPSLPSSSKRAKIFNTALNVRKQFIKLLVLARWSKDISDLQKSRNIIALLSEQQWQHEDVFAGLTDIRKILPNARMRNADLPTAIDVLHTGTYRRLPASIKQMAVAPKPFTDQQALLIVSRLEDALRTRMACRELVPAPLSNYTIHDGKVHFHVPGLFQAQLTASGSAQHELTPSSSDDRWWLLDLTFDVIASGSCAASCNRAFPRKPKRAYRERLRVWGDQQLSPVIQSDGVDESNARPLDIAADKTEQGTDVQIAPEKPTDAPTVNEANPAITATHHDDSLMPTAPVQRDAPLSRLFAFLQERALHYQMDILQHQAYELCRLNWGSNLRIETAERPRNLTVHYWTQAQGAAGATQRVESAAAGGSVQITIVDLPDTPGATETLAALFDGDDDQSSTTHDTASLTTVKRRGLQVTWDADRSILADAQSNNLAISPHSLDIEALLSSVIKQHTLALLRNLQRRILVSDHALSRLLRPEDCTLCLEHIQRQGDEFSTATETTTFNFLQIDLHASQRPRTAKSKPNPKPEQRSASCLAPLRLSVDPVTGRLLLDSEPAQSTTDLSSEQTSQQAASFTASILTTRPNYARLAEASDRINESIDALLDVLYRLDVFARVQEWERMASYLGLRSVRKLALRPQDLAKLGASTLASAEAAPQLFLPLRQSFGGYFLALQPSELAGVSIALVYVVQVMDPTGTPALSVQSIEWLDRAKIAAAASKVGSSGEDVGQEFVATEAGTKRKAPPGVQGETNDVDANFGSSELTIEELADVHSYCIALVSYFRVEQQLRMRGLPYLHVGSNTMRSSPPCKRQRRQQTADARDDGLFGEDASGGTASSDDEAFAGPAGVAGVAALVPSLCLRSIDVLGPSKSHLAKPNISLRVRHWDDDEKLCVEMRIKLRMKSRQFRTLHEVVALAASSDQQSTCALTWIDFDREASLLTLTTRDLDNCMSIFHTHWERVMRMVQLTREVLNASRAWQQRALRLRRSCKKPGERVELCRFELDSVVFSYGSIKVDGLEAKLLVRVRWQDAKLEMQAFSPIGVTQSGGYILEFGSMRSVQVEALDQDAQLREDGVSRWFDETHCLANPHKVMALELRRTVNVAARSAAMHAMLQPQAERIVWRGFLELLQHTLPLVREMAPLVDKCLTHAHVPEVEIKSATWFRFRFQDRYAIDVRLATRSRLVVSDASRALFASEVRTSESESESETTDAVPLDAVFGGSQLLNDLLDATTLARKCSKPKTRIAAQLSSAQFGPIPNIEHVLRSVHAKLDAITWIDARDHRSSAARLRVYELGRALLISLPSASHPNAQAAYHAIAHLVPLLIDRVEAQLARSTP</sequence>
<gene>
    <name type="primary">RGR1</name>
    <name type="synonym">MED14</name>
    <name type="ORF">UMAG_10778</name>
</gene>
<dbReference type="EMBL" id="CM003143">
    <property type="protein sequence ID" value="KIS70234.1"/>
    <property type="molecule type" value="Genomic_DNA"/>
</dbReference>
<dbReference type="RefSeq" id="XP_011388380.1">
    <property type="nucleotide sequence ID" value="XM_011390078.1"/>
</dbReference>
<dbReference type="STRING" id="237631.Q4P0P3"/>
<dbReference type="EnsemblFungi" id="KIS70234">
    <property type="protein sequence ID" value="KIS70234"/>
    <property type="gene ID" value="UMAG_10778"/>
</dbReference>
<dbReference type="GeneID" id="23566763"/>
<dbReference type="KEGG" id="uma:UMAG_10778"/>
<dbReference type="VEuPathDB" id="FungiDB:UMAG_10778"/>
<dbReference type="eggNOG" id="KOG1875">
    <property type="taxonomic scope" value="Eukaryota"/>
</dbReference>
<dbReference type="HOGENOM" id="CLU_246884_0_0_1"/>
<dbReference type="InParanoid" id="Q4P0P3"/>
<dbReference type="OrthoDB" id="205099at2759"/>
<dbReference type="Proteomes" id="UP000000561">
    <property type="component" value="Chromosome 4"/>
</dbReference>
<dbReference type="GO" id="GO:0070847">
    <property type="term" value="C:core mediator complex"/>
    <property type="evidence" value="ECO:0000318"/>
    <property type="project" value="GO_Central"/>
</dbReference>
<dbReference type="GO" id="GO:0016592">
    <property type="term" value="C:mediator complex"/>
    <property type="evidence" value="ECO:0000318"/>
    <property type="project" value="GO_Central"/>
</dbReference>
<dbReference type="GO" id="GO:0003712">
    <property type="term" value="F:transcription coregulator activity"/>
    <property type="evidence" value="ECO:0000318"/>
    <property type="project" value="GO_Central"/>
</dbReference>
<dbReference type="GO" id="GO:0006357">
    <property type="term" value="P:regulation of transcription by RNA polymerase II"/>
    <property type="evidence" value="ECO:0000318"/>
    <property type="project" value="GO_Central"/>
</dbReference>
<dbReference type="InterPro" id="IPR055122">
    <property type="entry name" value="Med14_N"/>
</dbReference>
<dbReference type="InterPro" id="IPR013947">
    <property type="entry name" value="Mediator_Med14"/>
</dbReference>
<dbReference type="PANTHER" id="PTHR12809">
    <property type="entry name" value="MEDIATOR COMPLEX SUBUNIT"/>
    <property type="match status" value="1"/>
</dbReference>
<dbReference type="PANTHER" id="PTHR12809:SF2">
    <property type="entry name" value="MEDIATOR OF RNA POLYMERASE II TRANSCRIPTION SUBUNIT 14"/>
    <property type="match status" value="1"/>
</dbReference>
<dbReference type="Pfam" id="PF08638">
    <property type="entry name" value="Med14"/>
    <property type="match status" value="1"/>
</dbReference>
<accession>Q4P0P3</accession>
<accession>A0A0D1E253</accession>
<organism>
    <name type="scientific">Mycosarcoma maydis</name>
    <name type="common">Corn smut fungus</name>
    <name type="synonym">Ustilago maydis</name>
    <dbReference type="NCBI Taxonomy" id="5270"/>
    <lineage>
        <taxon>Eukaryota</taxon>
        <taxon>Fungi</taxon>
        <taxon>Dikarya</taxon>
        <taxon>Basidiomycota</taxon>
        <taxon>Ustilaginomycotina</taxon>
        <taxon>Ustilaginomycetes</taxon>
        <taxon>Ustilaginales</taxon>
        <taxon>Ustilaginaceae</taxon>
        <taxon>Mycosarcoma</taxon>
    </lineage>
</organism>